<protein>
    <recommendedName>
        <fullName evidence="2">NAD(P)H-quinone oxidoreductase subunit 4L, organellar chromatophore</fullName>
        <ecNumber evidence="2">7.1.1.-</ecNumber>
    </recommendedName>
    <alternativeName>
        <fullName evidence="2">NAD(P)H dehydrogenase subunit 4L</fullName>
    </alternativeName>
    <alternativeName>
        <fullName evidence="2">NADH-plastoquinone oxidoreductase subunit 4L</fullName>
    </alternativeName>
</protein>
<proteinExistence type="inferred from homology"/>
<keyword id="KW-0472">Membrane</keyword>
<keyword id="KW-0520">NAD</keyword>
<keyword id="KW-0521">NADP</keyword>
<keyword id="KW-0994">Organellar chromatophore</keyword>
<keyword id="KW-0934">Plastid</keyword>
<keyword id="KW-0618">Plastoquinone</keyword>
<keyword id="KW-0874">Quinone</keyword>
<keyword id="KW-0793">Thylakoid</keyword>
<keyword id="KW-1278">Translocase</keyword>
<keyword id="KW-0812">Transmembrane</keyword>
<keyword id="KW-1133">Transmembrane helix</keyword>
<keyword id="KW-0813">Transport</keyword>
<organism>
    <name type="scientific">Paulinella chromatophora</name>
    <dbReference type="NCBI Taxonomy" id="39717"/>
    <lineage>
        <taxon>Eukaryota</taxon>
        <taxon>Sar</taxon>
        <taxon>Rhizaria</taxon>
        <taxon>Cercozoa</taxon>
        <taxon>Imbricatea</taxon>
        <taxon>Silicofilosea</taxon>
        <taxon>Euglyphida</taxon>
        <taxon>Paulinellidae</taxon>
        <taxon>Paulinella</taxon>
    </lineage>
</organism>
<accession>B1X495</accession>
<geneLocation type="organellar chromatophore"/>
<reference key="1">
    <citation type="journal article" date="2008" name="Curr. Biol.">
        <title>Chromatophore genome sequence of Paulinella sheds light on acquisition of photosynthesis by eukaryotes.</title>
        <authorList>
            <person name="Nowack E.C.M."/>
            <person name="Melkonian M."/>
            <person name="Gloeckner G."/>
        </authorList>
    </citation>
    <scope>NUCLEOTIDE SEQUENCE [LARGE SCALE GENOMIC DNA]</scope>
</reference>
<name>NU4LC_PAUCH</name>
<gene>
    <name evidence="2" type="primary">ndhE</name>
    <name type="ordered locus">PCC_0323</name>
</gene>
<evidence type="ECO:0000250" key="1"/>
<evidence type="ECO:0000255" key="2">
    <source>
        <dbReference type="HAMAP-Rule" id="MF_01456"/>
    </source>
</evidence>
<dbReference type="EC" id="7.1.1.-" evidence="2"/>
<dbReference type="EMBL" id="CP000815">
    <property type="protein sequence ID" value="ACB42764.1"/>
    <property type="molecule type" value="Genomic_DNA"/>
</dbReference>
<dbReference type="RefSeq" id="YP_002048974.1">
    <property type="nucleotide sequence ID" value="NC_011087.1"/>
</dbReference>
<dbReference type="SMR" id="B1X495"/>
<dbReference type="GeneID" id="6481773"/>
<dbReference type="GO" id="GO:0030964">
    <property type="term" value="C:NADH dehydrogenase complex"/>
    <property type="evidence" value="ECO:0007669"/>
    <property type="project" value="TreeGrafter"/>
</dbReference>
<dbReference type="GO" id="GO:0070118">
    <property type="term" value="C:organellar chromatophore thylakoid membrane"/>
    <property type="evidence" value="ECO:0007669"/>
    <property type="project" value="UniProtKB-SubCell"/>
</dbReference>
<dbReference type="GO" id="GO:0005886">
    <property type="term" value="C:plasma membrane"/>
    <property type="evidence" value="ECO:0007669"/>
    <property type="project" value="UniProtKB-UniRule"/>
</dbReference>
<dbReference type="GO" id="GO:0009536">
    <property type="term" value="C:plastid"/>
    <property type="evidence" value="ECO:0007669"/>
    <property type="project" value="UniProtKB-KW"/>
</dbReference>
<dbReference type="GO" id="GO:0050136">
    <property type="term" value="F:NADH:ubiquinone reductase (non-electrogenic) activity"/>
    <property type="evidence" value="ECO:0007669"/>
    <property type="project" value="UniProtKB-UniRule"/>
</dbReference>
<dbReference type="GO" id="GO:0048038">
    <property type="term" value="F:quinone binding"/>
    <property type="evidence" value="ECO:0007669"/>
    <property type="project" value="UniProtKB-KW"/>
</dbReference>
<dbReference type="GO" id="GO:0042773">
    <property type="term" value="P:ATP synthesis coupled electron transport"/>
    <property type="evidence" value="ECO:0007669"/>
    <property type="project" value="InterPro"/>
</dbReference>
<dbReference type="FunFam" id="1.10.287.3510:FF:000001">
    <property type="entry name" value="NADH-quinone oxidoreductase subunit K"/>
    <property type="match status" value="1"/>
</dbReference>
<dbReference type="Gene3D" id="1.10.287.3510">
    <property type="match status" value="1"/>
</dbReference>
<dbReference type="HAMAP" id="MF_01456">
    <property type="entry name" value="NDH1_NuoK"/>
    <property type="match status" value="1"/>
</dbReference>
<dbReference type="InterPro" id="IPR001133">
    <property type="entry name" value="NADH_UbQ_OxRdtase_chain4L/K"/>
</dbReference>
<dbReference type="InterPro" id="IPR039428">
    <property type="entry name" value="NUOK/Mnh_C1-like"/>
</dbReference>
<dbReference type="NCBIfam" id="NF004320">
    <property type="entry name" value="PRK05715.1-2"/>
    <property type="match status" value="1"/>
</dbReference>
<dbReference type="NCBIfam" id="NF004321">
    <property type="entry name" value="PRK05715.1-3"/>
    <property type="match status" value="1"/>
</dbReference>
<dbReference type="NCBIfam" id="NF004322">
    <property type="entry name" value="PRK05715.1-4"/>
    <property type="match status" value="1"/>
</dbReference>
<dbReference type="NCBIfam" id="NF004323">
    <property type="entry name" value="PRK05715.1-5"/>
    <property type="match status" value="1"/>
</dbReference>
<dbReference type="PANTHER" id="PTHR11434:SF16">
    <property type="entry name" value="NADH-UBIQUINONE OXIDOREDUCTASE CHAIN 4L"/>
    <property type="match status" value="1"/>
</dbReference>
<dbReference type="PANTHER" id="PTHR11434">
    <property type="entry name" value="NADH-UBIQUINONE OXIDOREDUCTASE SUBUNIT ND4L"/>
    <property type="match status" value="1"/>
</dbReference>
<dbReference type="Pfam" id="PF00420">
    <property type="entry name" value="Oxidored_q2"/>
    <property type="match status" value="1"/>
</dbReference>
<sequence length="103" mass="11540">MTIMLEAYLTLAAVLFCIGVWGLINSRNAVRVLMSIELMLNAVNINLMAFSNYLDGELIRGQVFAIFVITVAAAEAAVGLAILLSLYRNRQTVDMERFNLLRW</sequence>
<feature type="chain" id="PRO_0000360372" description="NAD(P)H-quinone oxidoreductase subunit 4L, organellar chromatophore">
    <location>
        <begin position="1"/>
        <end position="103"/>
    </location>
</feature>
<feature type="transmembrane region" description="Helical" evidence="2">
    <location>
        <begin position="3"/>
        <end position="23"/>
    </location>
</feature>
<feature type="transmembrane region" description="Helical" evidence="2">
    <location>
        <begin position="32"/>
        <end position="52"/>
    </location>
</feature>
<feature type="transmembrane region" description="Helical" evidence="2">
    <location>
        <begin position="63"/>
        <end position="83"/>
    </location>
</feature>
<comment type="function">
    <text evidence="2">NDH shuttles electrons from NAD(P)H:plastoquinone, via FMN and iron-sulfur (Fe-S) centers, to quinones in the photosynthetic chain and possibly in a chloroplast respiratory chain. The immediate electron acceptor for the enzyme in this species is believed to be plastoquinone. Couples the redox reaction to proton translocation, and thus conserves the redox energy in a proton gradient.</text>
</comment>
<comment type="catalytic activity">
    <reaction evidence="2">
        <text>a plastoquinone + NADH + (n+1) H(+)(in) = a plastoquinol + NAD(+) + n H(+)(out)</text>
        <dbReference type="Rhea" id="RHEA:42608"/>
        <dbReference type="Rhea" id="RHEA-COMP:9561"/>
        <dbReference type="Rhea" id="RHEA-COMP:9562"/>
        <dbReference type="ChEBI" id="CHEBI:15378"/>
        <dbReference type="ChEBI" id="CHEBI:17757"/>
        <dbReference type="ChEBI" id="CHEBI:57540"/>
        <dbReference type="ChEBI" id="CHEBI:57945"/>
        <dbReference type="ChEBI" id="CHEBI:62192"/>
    </reaction>
</comment>
<comment type="catalytic activity">
    <reaction evidence="2">
        <text>a plastoquinone + NADPH + (n+1) H(+)(in) = a plastoquinol + NADP(+) + n H(+)(out)</text>
        <dbReference type="Rhea" id="RHEA:42612"/>
        <dbReference type="Rhea" id="RHEA-COMP:9561"/>
        <dbReference type="Rhea" id="RHEA-COMP:9562"/>
        <dbReference type="ChEBI" id="CHEBI:15378"/>
        <dbReference type="ChEBI" id="CHEBI:17757"/>
        <dbReference type="ChEBI" id="CHEBI:57783"/>
        <dbReference type="ChEBI" id="CHEBI:58349"/>
        <dbReference type="ChEBI" id="CHEBI:62192"/>
    </reaction>
</comment>
<comment type="subunit">
    <text evidence="2">NDH is composed of at least 16 different subunits, 5 of which are encoded in the nucleus.</text>
</comment>
<comment type="subcellular location">
    <subcellularLocation>
        <location evidence="1">Plastid</location>
        <location evidence="1">Organellar chromatophore thylakoid membrane</location>
        <topology evidence="2">Multi-pass membrane protein</topology>
    </subcellularLocation>
</comment>
<comment type="similarity">
    <text evidence="2">Belongs to the complex I subunit 4L family.</text>
</comment>